<gene>
    <name evidence="1" type="primary">yaeP</name>
    <name type="ordered locus">SbBS512_E0183</name>
</gene>
<feature type="chain" id="PRO_1000136546" description="UPF0253 protein YaeP">
    <location>
        <begin position="1"/>
        <end position="66"/>
    </location>
</feature>
<organism>
    <name type="scientific">Shigella boydii serotype 18 (strain CDC 3083-94 / BS512)</name>
    <dbReference type="NCBI Taxonomy" id="344609"/>
    <lineage>
        <taxon>Bacteria</taxon>
        <taxon>Pseudomonadati</taxon>
        <taxon>Pseudomonadota</taxon>
        <taxon>Gammaproteobacteria</taxon>
        <taxon>Enterobacterales</taxon>
        <taxon>Enterobacteriaceae</taxon>
        <taxon>Shigella</taxon>
    </lineage>
</organism>
<evidence type="ECO:0000255" key="1">
    <source>
        <dbReference type="HAMAP-Rule" id="MF_01064"/>
    </source>
</evidence>
<protein>
    <recommendedName>
        <fullName evidence="1">UPF0253 protein YaeP</fullName>
    </recommendedName>
</protein>
<comment type="similarity">
    <text evidence="1">Belongs to the UPF0253 family.</text>
</comment>
<reference key="1">
    <citation type="submission" date="2008-05" db="EMBL/GenBank/DDBJ databases">
        <title>Complete sequence of Shigella boydii serotype 18 strain BS512.</title>
        <authorList>
            <person name="Rasko D.A."/>
            <person name="Rosovitz M."/>
            <person name="Maurelli A.T."/>
            <person name="Myers G."/>
            <person name="Seshadri R."/>
            <person name="Cer R."/>
            <person name="Jiang L."/>
            <person name="Ravel J."/>
            <person name="Sebastian Y."/>
        </authorList>
    </citation>
    <scope>NUCLEOTIDE SEQUENCE [LARGE SCALE GENOMIC DNA]</scope>
    <source>
        <strain>CDC 3083-94 / BS512</strain>
    </source>
</reference>
<accession>B2U333</accession>
<name>YAEP_SHIB3</name>
<dbReference type="EMBL" id="CP001063">
    <property type="protein sequence ID" value="ACD07517.1"/>
    <property type="molecule type" value="Genomic_DNA"/>
</dbReference>
<dbReference type="RefSeq" id="WP_000417058.1">
    <property type="nucleotide sequence ID" value="NC_010658.1"/>
</dbReference>
<dbReference type="SMR" id="B2U333"/>
<dbReference type="STRING" id="344609.SbBS512_E0183"/>
<dbReference type="KEGG" id="sbc:SbBS512_E0183"/>
<dbReference type="HOGENOM" id="CLU_190008_0_0_6"/>
<dbReference type="Proteomes" id="UP000001030">
    <property type="component" value="Chromosome"/>
</dbReference>
<dbReference type="HAMAP" id="MF_01064">
    <property type="entry name" value="UPF0253"/>
    <property type="match status" value="1"/>
</dbReference>
<dbReference type="InterPro" id="IPR009624">
    <property type="entry name" value="UPF0253"/>
</dbReference>
<dbReference type="NCBIfam" id="NF003436">
    <property type="entry name" value="PRK04964.1"/>
    <property type="match status" value="1"/>
</dbReference>
<dbReference type="Pfam" id="PF06786">
    <property type="entry name" value="UPF0253"/>
    <property type="match status" value="1"/>
</dbReference>
<proteinExistence type="inferred from homology"/>
<sequence length="66" mass="7214">MEKYCELIRKRYAEIASGDLGYVPDALGCVLKVLNEMAADDALSEAVREKAAYAAANLLVSDYVNE</sequence>
<keyword id="KW-1185">Reference proteome</keyword>